<name>ZAPB_PECCP</name>
<gene>
    <name evidence="1" type="primary">zapB</name>
    <name type="ordered locus">PC1_0162</name>
</gene>
<comment type="function">
    <text evidence="1">Non-essential, abundant cell division factor that is required for proper Z-ring formation. It is recruited early to the divisome by direct interaction with FtsZ, stimulating Z-ring assembly and thereby promoting cell division earlier in the cell cycle. Its recruitment to the Z-ring requires functional FtsA or ZipA.</text>
</comment>
<comment type="subunit">
    <text evidence="1">Homodimer. The ends of the coiled-coil dimer bind to each other, forming polymers. Interacts with FtsZ.</text>
</comment>
<comment type="subcellular location">
    <subcellularLocation>
        <location evidence="1">Cytoplasm</location>
    </subcellularLocation>
    <text evidence="1">Localizes to the septum at mid-cell, in a FtsZ-like pattern.</text>
</comment>
<comment type="similarity">
    <text evidence="1">Belongs to the ZapB family.</text>
</comment>
<accession>C6DHM3</accession>
<feature type="chain" id="PRO_1000213805" description="Cell division protein ZapB">
    <location>
        <begin position="1"/>
        <end position="79"/>
    </location>
</feature>
<feature type="coiled-coil region" evidence="1">
    <location>
        <begin position="4"/>
        <end position="78"/>
    </location>
</feature>
<sequence length="79" mass="9131">MSFEVFEKLEAKVQQAIDTITLLQMEIEELKEQNNALSQDVQAAAGSREALVRENEQLKEEQVVWQERLRALLGKMEEV</sequence>
<proteinExistence type="inferred from homology"/>
<organism>
    <name type="scientific">Pectobacterium carotovorum subsp. carotovorum (strain PC1)</name>
    <dbReference type="NCBI Taxonomy" id="561230"/>
    <lineage>
        <taxon>Bacteria</taxon>
        <taxon>Pseudomonadati</taxon>
        <taxon>Pseudomonadota</taxon>
        <taxon>Gammaproteobacteria</taxon>
        <taxon>Enterobacterales</taxon>
        <taxon>Pectobacteriaceae</taxon>
        <taxon>Pectobacterium</taxon>
    </lineage>
</organism>
<protein>
    <recommendedName>
        <fullName evidence="1">Cell division protein ZapB</fullName>
    </recommendedName>
</protein>
<dbReference type="EMBL" id="CP001657">
    <property type="protein sequence ID" value="ACT11223.1"/>
    <property type="molecule type" value="Genomic_DNA"/>
</dbReference>
<dbReference type="RefSeq" id="WP_010281529.1">
    <property type="nucleotide sequence ID" value="NC_012917.1"/>
</dbReference>
<dbReference type="SMR" id="C6DHM3"/>
<dbReference type="STRING" id="561230.PC1_0162"/>
<dbReference type="GeneID" id="93392232"/>
<dbReference type="KEGG" id="pct:PC1_0162"/>
<dbReference type="eggNOG" id="COG3074">
    <property type="taxonomic scope" value="Bacteria"/>
</dbReference>
<dbReference type="HOGENOM" id="CLU_171174_2_0_6"/>
<dbReference type="OrthoDB" id="6554593at2"/>
<dbReference type="Proteomes" id="UP000002736">
    <property type="component" value="Chromosome"/>
</dbReference>
<dbReference type="GO" id="GO:0005737">
    <property type="term" value="C:cytoplasm"/>
    <property type="evidence" value="ECO:0007669"/>
    <property type="project" value="UniProtKB-SubCell"/>
</dbReference>
<dbReference type="GO" id="GO:0000917">
    <property type="term" value="P:division septum assembly"/>
    <property type="evidence" value="ECO:0007669"/>
    <property type="project" value="UniProtKB-KW"/>
</dbReference>
<dbReference type="GO" id="GO:0043093">
    <property type="term" value="P:FtsZ-dependent cytokinesis"/>
    <property type="evidence" value="ECO:0007669"/>
    <property type="project" value="UniProtKB-UniRule"/>
</dbReference>
<dbReference type="Gene3D" id="1.20.5.340">
    <property type="match status" value="1"/>
</dbReference>
<dbReference type="HAMAP" id="MF_01196">
    <property type="entry name" value="ZapB"/>
    <property type="match status" value="1"/>
</dbReference>
<dbReference type="InterPro" id="IPR009252">
    <property type="entry name" value="Cell_div_ZapB"/>
</dbReference>
<dbReference type="NCBIfam" id="NF011951">
    <property type="entry name" value="PRK15422.1"/>
    <property type="match status" value="1"/>
</dbReference>
<dbReference type="Pfam" id="PF06005">
    <property type="entry name" value="ZapB"/>
    <property type="match status" value="1"/>
</dbReference>
<evidence type="ECO:0000255" key="1">
    <source>
        <dbReference type="HAMAP-Rule" id="MF_01196"/>
    </source>
</evidence>
<reference key="1">
    <citation type="submission" date="2009-07" db="EMBL/GenBank/DDBJ databases">
        <title>Complete sequence of Pectobacterium carotovorum subsp. carotovorum PC1.</title>
        <authorList>
            <consortium name="US DOE Joint Genome Institute"/>
            <person name="Lucas S."/>
            <person name="Copeland A."/>
            <person name="Lapidus A."/>
            <person name="Glavina del Rio T."/>
            <person name="Tice H."/>
            <person name="Bruce D."/>
            <person name="Goodwin L."/>
            <person name="Pitluck S."/>
            <person name="Munk A.C."/>
            <person name="Brettin T."/>
            <person name="Detter J.C."/>
            <person name="Han C."/>
            <person name="Tapia R."/>
            <person name="Larimer F."/>
            <person name="Land M."/>
            <person name="Hauser L."/>
            <person name="Kyrpides N."/>
            <person name="Mikhailova N."/>
            <person name="Balakrishnan V."/>
            <person name="Glasner J."/>
            <person name="Perna N.T."/>
        </authorList>
    </citation>
    <scope>NUCLEOTIDE SEQUENCE [LARGE SCALE GENOMIC DNA]</scope>
    <source>
        <strain>PC1</strain>
    </source>
</reference>
<keyword id="KW-0131">Cell cycle</keyword>
<keyword id="KW-0132">Cell division</keyword>
<keyword id="KW-0175">Coiled coil</keyword>
<keyword id="KW-0963">Cytoplasm</keyword>
<keyword id="KW-0717">Septation</keyword>